<organism>
    <name type="scientific">Gallus gallus</name>
    <name type="common">Chicken</name>
    <dbReference type="NCBI Taxonomy" id="9031"/>
    <lineage>
        <taxon>Eukaryota</taxon>
        <taxon>Metazoa</taxon>
        <taxon>Chordata</taxon>
        <taxon>Craniata</taxon>
        <taxon>Vertebrata</taxon>
        <taxon>Euteleostomi</taxon>
        <taxon>Archelosauria</taxon>
        <taxon>Archosauria</taxon>
        <taxon>Dinosauria</taxon>
        <taxon>Saurischia</taxon>
        <taxon>Theropoda</taxon>
        <taxon>Coelurosauria</taxon>
        <taxon>Aves</taxon>
        <taxon>Neognathae</taxon>
        <taxon>Galloanserae</taxon>
        <taxon>Galliformes</taxon>
        <taxon>Phasianidae</taxon>
        <taxon>Phasianinae</taxon>
        <taxon>Gallus</taxon>
    </lineage>
</organism>
<protein>
    <recommendedName>
        <fullName>Transcription factor MafG</fullName>
    </recommendedName>
    <alternativeName>
        <fullName>V-maf musculoaponeurotic fibrosarcoma oncogene homolog G</fullName>
    </alternativeName>
</protein>
<comment type="function">
    <text evidence="1">Since they lack a putative transactivation domain, the small Mafs behave as transcriptional repressors when they dimerize among themselves. However, they seem to serve as transcriptional activators by dimerizing with other (usually larger) basic-zipper proteins and recruiting them to specific DNA-binding sites. Small Maf proteins heterodimerize with Fos and may act as competitive repressors of the NF-E2 transcription factor. Transcription factor, component of erythroid-specific transcription factor NF-E2. May be involved in signal transduction of extracellular H(+) (By similarity).</text>
</comment>
<comment type="subunit">
    <text>Homodimer or heterodimer.</text>
</comment>
<comment type="subcellular location">
    <subcellularLocation>
        <location>Nucleus</location>
    </subcellularLocation>
</comment>
<comment type="PTM">
    <text evidence="1">Sumoylation at Lys-14 is required for active transcriptional repression.</text>
</comment>
<comment type="similarity">
    <text evidence="4">Belongs to the bZIP family. Maf subfamily.</text>
</comment>
<evidence type="ECO:0000250" key="1"/>
<evidence type="ECO:0000255" key="2">
    <source>
        <dbReference type="PROSITE-ProRule" id="PRU00978"/>
    </source>
</evidence>
<evidence type="ECO:0000256" key="3">
    <source>
        <dbReference type="SAM" id="MobiDB-lite"/>
    </source>
</evidence>
<evidence type="ECO:0000305" key="4"/>
<proteinExistence type="inferred from homology"/>
<gene>
    <name type="primary">MAFG</name>
</gene>
<dbReference type="EMBL" id="D28602">
    <property type="protein sequence ID" value="BAA05939.1"/>
    <property type="molecule type" value="Genomic_DNA"/>
</dbReference>
<dbReference type="PIR" id="I50378">
    <property type="entry name" value="A56254"/>
</dbReference>
<dbReference type="RefSeq" id="NP_001072957.1">
    <property type="nucleotide sequence ID" value="NM_001079489.1"/>
</dbReference>
<dbReference type="RefSeq" id="XP_015150912.1">
    <property type="nucleotide sequence ID" value="XM_015295426.4"/>
</dbReference>
<dbReference type="RefSeq" id="XP_015150913.1">
    <property type="nucleotide sequence ID" value="XM_015295427.4"/>
</dbReference>
<dbReference type="RefSeq" id="XP_015150914.1">
    <property type="nucleotide sequence ID" value="XM_015295428.4"/>
</dbReference>
<dbReference type="RefSeq" id="XP_015150915.1">
    <property type="nucleotide sequence ID" value="XM_015295429.4"/>
</dbReference>
<dbReference type="RefSeq" id="XP_015150916.1">
    <property type="nucleotide sequence ID" value="XM_015295430.1"/>
</dbReference>
<dbReference type="RefSeq" id="XP_015150917.1">
    <property type="nucleotide sequence ID" value="XM_015295431.4"/>
</dbReference>
<dbReference type="RefSeq" id="XP_040505516.1">
    <property type="nucleotide sequence ID" value="XM_040649582.1"/>
</dbReference>
<dbReference type="RefSeq" id="XP_046758021.1">
    <property type="nucleotide sequence ID" value="XM_046902065.1"/>
</dbReference>
<dbReference type="RefSeq" id="XP_046785516.1">
    <property type="nucleotide sequence ID" value="XM_046929560.1"/>
</dbReference>
<dbReference type="RefSeq" id="XP_046785517.1">
    <property type="nucleotide sequence ID" value="XM_046929561.1"/>
</dbReference>
<dbReference type="RefSeq" id="XP_046785518.1">
    <property type="nucleotide sequence ID" value="XM_046929562.1"/>
</dbReference>
<dbReference type="RefSeq" id="XP_046785519.1">
    <property type="nucleotide sequence ID" value="XM_046929563.1"/>
</dbReference>
<dbReference type="RefSeq" id="XP_046785520.1">
    <property type="nucleotide sequence ID" value="XM_046929564.1"/>
</dbReference>
<dbReference type="RefSeq" id="XP_046785521.1">
    <property type="nucleotide sequence ID" value="XM_046929565.1"/>
</dbReference>
<dbReference type="RefSeq" id="XP_046785522.1">
    <property type="nucleotide sequence ID" value="XM_046929566.1"/>
</dbReference>
<dbReference type="SMR" id="Q90889"/>
<dbReference type="FunCoup" id="Q90889">
    <property type="interactions" value="1088"/>
</dbReference>
<dbReference type="MINT" id="Q90889"/>
<dbReference type="STRING" id="9031.ENSGALP00000052002"/>
<dbReference type="PaxDb" id="9031-ENSGALP00000011799"/>
<dbReference type="Ensembl" id="ENSGALT00010070827.1">
    <property type="protein sequence ID" value="ENSGALP00010043518.1"/>
    <property type="gene ID" value="ENSGALG00010029286.1"/>
</dbReference>
<dbReference type="GeneID" id="769355"/>
<dbReference type="KEGG" id="gga:769355"/>
<dbReference type="CTD" id="4097"/>
<dbReference type="VEuPathDB" id="HostDB:geneid_769355"/>
<dbReference type="eggNOG" id="KOG4196">
    <property type="taxonomic scope" value="Eukaryota"/>
</dbReference>
<dbReference type="GeneTree" id="ENSGT00940000160070"/>
<dbReference type="HOGENOM" id="CLU_112948_0_0_1"/>
<dbReference type="InParanoid" id="Q90889"/>
<dbReference type="OMA" id="QHSRYRF"/>
<dbReference type="OrthoDB" id="5974330at2759"/>
<dbReference type="PhylomeDB" id="Q90889"/>
<dbReference type="TreeFam" id="TF325689"/>
<dbReference type="PRO" id="PR:Q90889"/>
<dbReference type="Proteomes" id="UP000000539">
    <property type="component" value="Chromosome 18"/>
</dbReference>
<dbReference type="Bgee" id="ENSGALG00000031475">
    <property type="expression patterns" value="Expressed in lung and 14 other cell types or tissues"/>
</dbReference>
<dbReference type="GO" id="GO:0005634">
    <property type="term" value="C:nucleus"/>
    <property type="evidence" value="ECO:0000318"/>
    <property type="project" value="GO_Central"/>
</dbReference>
<dbReference type="GO" id="GO:0000981">
    <property type="term" value="F:DNA-binding transcription factor activity, RNA polymerase II-specific"/>
    <property type="evidence" value="ECO:0000318"/>
    <property type="project" value="GO_Central"/>
</dbReference>
<dbReference type="GO" id="GO:0000978">
    <property type="term" value="F:RNA polymerase II cis-regulatory region sequence-specific DNA binding"/>
    <property type="evidence" value="ECO:0000318"/>
    <property type="project" value="GO_Central"/>
</dbReference>
<dbReference type="GO" id="GO:0045604">
    <property type="term" value="P:regulation of epidermal cell differentiation"/>
    <property type="evidence" value="ECO:0000318"/>
    <property type="project" value="GO_Central"/>
</dbReference>
<dbReference type="GO" id="GO:0006357">
    <property type="term" value="P:regulation of transcription by RNA polymerase II"/>
    <property type="evidence" value="ECO:0000318"/>
    <property type="project" value="GO_Central"/>
</dbReference>
<dbReference type="CDD" id="cd14717">
    <property type="entry name" value="bZIP_Maf_small"/>
    <property type="match status" value="1"/>
</dbReference>
<dbReference type="FunFam" id="1.20.5.170:FF:000011">
    <property type="entry name" value="Transcription factor MafG, putative"/>
    <property type="match status" value="1"/>
</dbReference>
<dbReference type="Gene3D" id="1.20.5.170">
    <property type="match status" value="1"/>
</dbReference>
<dbReference type="InterPro" id="IPR004827">
    <property type="entry name" value="bZIP"/>
</dbReference>
<dbReference type="InterPro" id="IPR004826">
    <property type="entry name" value="bZIP_Maf"/>
</dbReference>
<dbReference type="InterPro" id="IPR046347">
    <property type="entry name" value="bZIP_sf"/>
</dbReference>
<dbReference type="InterPro" id="IPR008917">
    <property type="entry name" value="TF_DNA-bd_sf"/>
</dbReference>
<dbReference type="InterPro" id="IPR024874">
    <property type="entry name" value="Transcription_factor_Maf_fam"/>
</dbReference>
<dbReference type="PANTHER" id="PTHR10129">
    <property type="entry name" value="TRANSCRIPTION FACTOR MAF"/>
    <property type="match status" value="1"/>
</dbReference>
<dbReference type="PANTHER" id="PTHR10129:SF15">
    <property type="entry name" value="TRANSCRIPTION FACTOR MAFG"/>
    <property type="match status" value="1"/>
</dbReference>
<dbReference type="Pfam" id="PF03131">
    <property type="entry name" value="bZIP_Maf"/>
    <property type="match status" value="1"/>
</dbReference>
<dbReference type="SMART" id="SM00338">
    <property type="entry name" value="BRLZ"/>
    <property type="match status" value="1"/>
</dbReference>
<dbReference type="SUPFAM" id="SSF47454">
    <property type="entry name" value="A DNA-binding domain in eukaryotic transcription factors"/>
    <property type="match status" value="1"/>
</dbReference>
<dbReference type="SUPFAM" id="SSF57959">
    <property type="entry name" value="Leucine zipper domain"/>
    <property type="match status" value="1"/>
</dbReference>
<dbReference type="PROSITE" id="PS50217">
    <property type="entry name" value="BZIP"/>
    <property type="match status" value="1"/>
</dbReference>
<reference key="1">
    <citation type="journal article" date="1995" name="Mol. Cell. Biol.">
        <title>Small Maf proteins heterodimerize with Fos and may act as competitive repressors of the NF-E2 transcription factor.</title>
        <authorList>
            <person name="Kataoka K."/>
            <person name="Igarashi K."/>
            <person name="Itoh K."/>
            <person name="Fujiwara K.T."/>
            <person name="Noda M."/>
            <person name="Yamamoto M."/>
            <person name="Nishizawa M."/>
        </authorList>
    </citation>
    <scope>NUCLEOTIDE SEQUENCE [GENOMIC DNA]</scope>
</reference>
<accession>Q90889</accession>
<keyword id="KW-0238">DNA-binding</keyword>
<keyword id="KW-1017">Isopeptide bond</keyword>
<keyword id="KW-0539">Nucleus</keyword>
<keyword id="KW-1185">Reference proteome</keyword>
<keyword id="KW-0678">Repressor</keyword>
<keyword id="KW-0804">Transcription</keyword>
<keyword id="KW-0805">Transcription regulation</keyword>
<keyword id="KW-0832">Ubl conjugation</keyword>
<feature type="chain" id="PRO_0000076502" description="Transcription factor MafG">
    <location>
        <begin position="1"/>
        <end position="162"/>
    </location>
</feature>
<feature type="domain" description="bZIP" evidence="2">
    <location>
        <begin position="51"/>
        <end position="114"/>
    </location>
</feature>
<feature type="region of interest" description="Disordered" evidence="3">
    <location>
        <begin position="1"/>
        <end position="24"/>
    </location>
</feature>
<feature type="region of interest" description="Basic motif" evidence="2">
    <location>
        <begin position="53"/>
        <end position="76"/>
    </location>
</feature>
<feature type="region of interest" description="Leucine-zipper" evidence="2">
    <location>
        <begin position="79"/>
        <end position="93"/>
    </location>
</feature>
<feature type="cross-link" description="Glycyl lysine isopeptide (Lys-Gly) (interchain with G-Cter in SUMO)" evidence="1">
    <location>
        <position position="14"/>
    </location>
</feature>
<name>MAFG_CHICK</name>
<sequence>MTTPNKGNKALKVKREPGENGTSLTDEELVTMSVRELNQHLRGLSKEEIIQLKQRRRTLKNRGYAASCRVKRVTQKEELEKQKAELQQEVEKLASENASMKMELDALRSKYEALQNFARTVARSPVTPVRGPLTSSMGPLVPGKVATTSVITIVKSKTDARS</sequence>